<protein>
    <recommendedName>
        <fullName>Pyruvate kinase</fullName>
        <shortName>PK</shortName>
        <ecNumber>2.7.1.40</ecNumber>
    </recommendedName>
</protein>
<proteinExistence type="evidence at protein level"/>
<keyword id="KW-0067">ATP-binding</keyword>
<keyword id="KW-0324">Glycolysis</keyword>
<keyword id="KW-0418">Kinase</keyword>
<keyword id="KW-0460">Magnesium</keyword>
<keyword id="KW-0479">Metal-binding</keyword>
<keyword id="KW-0547">Nucleotide-binding</keyword>
<keyword id="KW-0630">Potassium</keyword>
<keyword id="KW-0670">Pyruvate</keyword>
<keyword id="KW-1185">Reference proteome</keyword>
<keyword id="KW-0808">Transferase</keyword>
<dbReference type="EC" id="2.7.1.40"/>
<dbReference type="EMBL" id="BA000002">
    <property type="protein sequence ID" value="BAA79454.1"/>
    <property type="molecule type" value="Genomic_DNA"/>
</dbReference>
<dbReference type="PIR" id="B72745">
    <property type="entry name" value="B72745"/>
</dbReference>
<dbReference type="RefSeq" id="WP_010865788.1">
    <property type="nucleotide sequence ID" value="NC_000854.2"/>
</dbReference>
<dbReference type="SMR" id="Q9YEU2"/>
<dbReference type="STRING" id="272557.APE_0489"/>
<dbReference type="EnsemblBacteria" id="BAA79454">
    <property type="protein sequence ID" value="BAA79454"/>
    <property type="gene ID" value="APE_0489"/>
</dbReference>
<dbReference type="GeneID" id="1444673"/>
<dbReference type="KEGG" id="ape:APE_0489"/>
<dbReference type="PATRIC" id="fig|272557.25.peg.372"/>
<dbReference type="eggNOG" id="arCOG04120">
    <property type="taxonomic scope" value="Archaea"/>
</dbReference>
<dbReference type="UniPathway" id="UPA00109">
    <property type="reaction ID" value="UER00188"/>
</dbReference>
<dbReference type="Proteomes" id="UP000002518">
    <property type="component" value="Chromosome"/>
</dbReference>
<dbReference type="GO" id="GO:0005524">
    <property type="term" value="F:ATP binding"/>
    <property type="evidence" value="ECO:0007669"/>
    <property type="project" value="UniProtKB-KW"/>
</dbReference>
<dbReference type="GO" id="GO:0016301">
    <property type="term" value="F:kinase activity"/>
    <property type="evidence" value="ECO:0007669"/>
    <property type="project" value="UniProtKB-KW"/>
</dbReference>
<dbReference type="GO" id="GO:0000287">
    <property type="term" value="F:magnesium ion binding"/>
    <property type="evidence" value="ECO:0007669"/>
    <property type="project" value="InterPro"/>
</dbReference>
<dbReference type="GO" id="GO:0030955">
    <property type="term" value="F:potassium ion binding"/>
    <property type="evidence" value="ECO:0007669"/>
    <property type="project" value="InterPro"/>
</dbReference>
<dbReference type="GO" id="GO:0004743">
    <property type="term" value="F:pyruvate kinase activity"/>
    <property type="evidence" value="ECO:0007669"/>
    <property type="project" value="UniProtKB-EC"/>
</dbReference>
<dbReference type="Gene3D" id="3.20.20.60">
    <property type="entry name" value="Phosphoenolpyruvate-binding domains"/>
    <property type="match status" value="1"/>
</dbReference>
<dbReference type="Gene3D" id="2.40.33.10">
    <property type="entry name" value="PK beta-barrel domain-like"/>
    <property type="match status" value="1"/>
</dbReference>
<dbReference type="Gene3D" id="3.40.1380.20">
    <property type="entry name" value="Pyruvate kinase, C-terminal domain"/>
    <property type="match status" value="1"/>
</dbReference>
<dbReference type="InterPro" id="IPR001697">
    <property type="entry name" value="Pyr_Knase"/>
</dbReference>
<dbReference type="InterPro" id="IPR015813">
    <property type="entry name" value="Pyrv/PenolPyrv_kinase-like_dom"/>
</dbReference>
<dbReference type="InterPro" id="IPR040442">
    <property type="entry name" value="Pyrv_kinase-like_dom_sf"/>
</dbReference>
<dbReference type="InterPro" id="IPR011037">
    <property type="entry name" value="Pyrv_Knase-like_insert_dom_sf"/>
</dbReference>
<dbReference type="InterPro" id="IPR015793">
    <property type="entry name" value="Pyrv_Knase_brl"/>
</dbReference>
<dbReference type="InterPro" id="IPR036918">
    <property type="entry name" value="Pyrv_Knase_C_sf"/>
</dbReference>
<dbReference type="InterPro" id="IPR015806">
    <property type="entry name" value="Pyrv_Knase_insert_dom_sf"/>
</dbReference>
<dbReference type="NCBIfam" id="TIGR01064">
    <property type="entry name" value="pyruv_kin"/>
    <property type="match status" value="1"/>
</dbReference>
<dbReference type="PANTHER" id="PTHR11817">
    <property type="entry name" value="PYRUVATE KINASE"/>
    <property type="match status" value="1"/>
</dbReference>
<dbReference type="Pfam" id="PF00224">
    <property type="entry name" value="PK"/>
    <property type="match status" value="1"/>
</dbReference>
<dbReference type="PRINTS" id="PR01050">
    <property type="entry name" value="PYRUVTKNASE"/>
</dbReference>
<dbReference type="SUPFAM" id="SSF51621">
    <property type="entry name" value="Phosphoenolpyruvate/pyruvate domain"/>
    <property type="match status" value="1"/>
</dbReference>
<dbReference type="SUPFAM" id="SSF50800">
    <property type="entry name" value="PK beta-barrel domain-like"/>
    <property type="match status" value="1"/>
</dbReference>
<dbReference type="SUPFAM" id="SSF52935">
    <property type="entry name" value="PK C-terminal domain-like"/>
    <property type="match status" value="1"/>
</dbReference>
<sequence>MRGPVKIVATVGPSSSSASILAQMLSLGVDVARINASHGGVEQWNSMLESLRRAEEAVGKRVGVAVDLEGPRVRTGNSEPVKLEKGDLVTLGFMEGDVPVDARQFFETIDEGDIVLLDDGKIILQVESVEGFRVKARVLEGGVLGPRKGVVVRGKEPDLPPLSAKDRRALEFFADKGVSHVYVSFARSAEHVEKVRTVVRRLGLRQARIFAKIEGPSGVSRIGEIAEASDGVIIARGDLGMHYSLEELPEIQELIVWEARKRYKTVVLATEFLSSMIEKPVPTRSEVVDIYQAVLQTADALMLTGETAIGKYPVKSVQWMAKISSRAYKKLATSPPERPRPTSTPYKLALGLVELAESLDSPLVVYSKTGRFAERLASFKPLKTFYVGVPSREVERVVRHLWGAEPIVVGDYPYEAGLAKTYEKLRRENIIHGDETVVEAAWSSERGIYIIRVRNLEF</sequence>
<feature type="chain" id="PRO_0000295180" description="Pyruvate kinase">
    <location>
        <begin position="1"/>
        <end position="458"/>
    </location>
</feature>
<feature type="binding site" evidence="1">
    <location>
        <position position="33"/>
    </location>
    <ligand>
        <name>substrate</name>
    </ligand>
</feature>
<feature type="binding site" evidence="2">
    <location>
        <begin position="35"/>
        <end position="38"/>
    </location>
    <ligand>
        <name>ATP</name>
        <dbReference type="ChEBI" id="CHEBI:30616"/>
    </ligand>
</feature>
<feature type="binding site" evidence="1">
    <location>
        <position position="35"/>
    </location>
    <ligand>
        <name>K(+)</name>
        <dbReference type="ChEBI" id="CHEBI:29103"/>
    </ligand>
</feature>
<feature type="binding site" evidence="1">
    <location>
        <position position="37"/>
    </location>
    <ligand>
        <name>K(+)</name>
        <dbReference type="ChEBI" id="CHEBI:29103"/>
    </ligand>
</feature>
<feature type="binding site" evidence="1">
    <location>
        <position position="67"/>
    </location>
    <ligand>
        <name>K(+)</name>
        <dbReference type="ChEBI" id="CHEBI:29103"/>
    </ligand>
</feature>
<feature type="binding site" evidence="2">
    <location>
        <position position="74"/>
    </location>
    <ligand>
        <name>ATP</name>
        <dbReference type="ChEBI" id="CHEBI:30616"/>
    </ligand>
</feature>
<feature type="binding site" evidence="2">
    <location>
        <position position="148"/>
    </location>
    <ligand>
        <name>ATP</name>
        <dbReference type="ChEBI" id="CHEBI:30616"/>
    </ligand>
</feature>
<feature type="binding site" evidence="1">
    <location>
        <position position="214"/>
    </location>
    <ligand>
        <name>Mg(2+)</name>
        <dbReference type="ChEBI" id="CHEBI:18420"/>
    </ligand>
</feature>
<feature type="binding site" evidence="1">
    <location>
        <position position="237"/>
    </location>
    <ligand>
        <name>substrate</name>
    </ligand>
</feature>
<feature type="binding site" evidence="1">
    <location>
        <position position="238"/>
    </location>
    <ligand>
        <name>Mg(2+)</name>
        <dbReference type="ChEBI" id="CHEBI:18420"/>
    </ligand>
</feature>
<feature type="binding site" evidence="1">
    <location>
        <position position="238"/>
    </location>
    <ligand>
        <name>substrate</name>
    </ligand>
</feature>
<feature type="binding site" evidence="1">
    <location>
        <position position="270"/>
    </location>
    <ligand>
        <name>substrate</name>
    </ligand>
</feature>
<feature type="site" description="Transition state stabilizer" evidence="1">
    <location>
        <position position="212"/>
    </location>
</feature>
<name>KPYK_AERPE</name>
<comment type="catalytic activity">
    <reaction>
        <text>pyruvate + ATP = phosphoenolpyruvate + ADP + H(+)</text>
        <dbReference type="Rhea" id="RHEA:18157"/>
        <dbReference type="ChEBI" id="CHEBI:15361"/>
        <dbReference type="ChEBI" id="CHEBI:15378"/>
        <dbReference type="ChEBI" id="CHEBI:30616"/>
        <dbReference type="ChEBI" id="CHEBI:58702"/>
        <dbReference type="ChEBI" id="CHEBI:456216"/>
        <dbReference type="EC" id="2.7.1.40"/>
    </reaction>
</comment>
<comment type="cofactor">
    <cofactor evidence="3">
        <name>a divalent metal cation</name>
        <dbReference type="ChEBI" id="CHEBI:60240"/>
    </cofactor>
</comment>
<comment type="activity regulation">
    <text>Not activated by classical allosteric effectors.</text>
</comment>
<comment type="biophysicochemical properties">
    <kinetics>
        <Vmax evidence="3">53.0 umol/min/mg enzyme (at 65 degrees Celsius)</Vmax>
    </kinetics>
    <phDependence>
        <text evidence="3">Optimum pH is 6.1.</text>
    </phDependence>
    <temperatureDependence>
        <text evidence="3">Optimum temperature is higher than 95 degrees Celsius. Still active after 120 minutes at 100 degrees Celsius.</text>
    </temperatureDependence>
</comment>
<comment type="pathway">
    <text>Carbohydrate degradation; glycolysis; pyruvate from D-glyceraldehyde 3-phosphate: step 5/5.</text>
</comment>
<comment type="subunit">
    <text evidence="3">Homotetramer.</text>
</comment>
<comment type="similarity">
    <text evidence="4">Belongs to the pyruvate kinase family.</text>
</comment>
<gene>
    <name type="primary">pyk</name>
    <name type="ordered locus">APE_0489</name>
</gene>
<evidence type="ECO:0000250" key="1"/>
<evidence type="ECO:0000250" key="2">
    <source>
        <dbReference type="UniProtKB" id="P14618"/>
    </source>
</evidence>
<evidence type="ECO:0000269" key="3">
    <source>
    </source>
</evidence>
<evidence type="ECO:0000305" key="4"/>
<reference key="1">
    <citation type="journal article" date="1999" name="DNA Res.">
        <title>Complete genome sequence of an aerobic hyper-thermophilic crenarchaeon, Aeropyrum pernix K1.</title>
        <authorList>
            <person name="Kawarabayasi Y."/>
            <person name="Hino Y."/>
            <person name="Horikawa H."/>
            <person name="Yamazaki S."/>
            <person name="Haikawa Y."/>
            <person name="Jin-no K."/>
            <person name="Takahashi M."/>
            <person name="Sekine M."/>
            <person name="Baba S."/>
            <person name="Ankai A."/>
            <person name="Kosugi H."/>
            <person name="Hosoyama A."/>
            <person name="Fukui S."/>
            <person name="Nagai Y."/>
            <person name="Nishijima K."/>
            <person name="Nakazawa H."/>
            <person name="Takamiya M."/>
            <person name="Masuda S."/>
            <person name="Funahashi T."/>
            <person name="Tanaka T."/>
            <person name="Kudoh Y."/>
            <person name="Yamazaki J."/>
            <person name="Kushida N."/>
            <person name="Oguchi A."/>
            <person name="Aoki K."/>
            <person name="Kubota K."/>
            <person name="Nakamura Y."/>
            <person name="Nomura N."/>
            <person name="Sako Y."/>
            <person name="Kikuchi H."/>
        </authorList>
    </citation>
    <scope>NUCLEOTIDE SEQUENCE [LARGE SCALE GENOMIC DNA]</scope>
    <source>
        <strain>ATCC 700893 / DSM 11879 / JCM 9820 / NBRC 100138 / K1</strain>
    </source>
</reference>
<reference key="2">
    <citation type="journal article" date="2003" name="J. Biol. Chem.">
        <title>Comparative analysis of pyruvate kinases from the hyperthermophilic archaea Archaeoglobus fulgidus, Aeropyrum pernix, and Pyrobaculum aerophilum and the hyperthermophilic bacterium Thermotoga maritima: unusual regulatory properties in hyperthermophilic archaea.</title>
        <authorList>
            <person name="Johnsen U."/>
            <person name="Hansen T."/>
            <person name="Schoenheit P."/>
        </authorList>
    </citation>
    <scope>BIOPHYSICOCHEMICAL PROPERTIES</scope>
    <scope>COFACTOR</scope>
    <scope>SUBUNIT</scope>
    <scope>REGULATION</scope>
    <source>
        <strain>ATCC 700893 / DSM 11879 / JCM 9820 / NBRC 100138 / K1</strain>
    </source>
</reference>
<organism>
    <name type="scientific">Aeropyrum pernix (strain ATCC 700893 / DSM 11879 / JCM 9820 / NBRC 100138 / K1)</name>
    <dbReference type="NCBI Taxonomy" id="272557"/>
    <lineage>
        <taxon>Archaea</taxon>
        <taxon>Thermoproteota</taxon>
        <taxon>Thermoprotei</taxon>
        <taxon>Desulfurococcales</taxon>
        <taxon>Desulfurococcaceae</taxon>
        <taxon>Aeropyrum</taxon>
    </lineage>
</organism>
<accession>Q9YEU2</accession>